<sequence>MGFTDETVRFKLDDGDKRQISETLTAVYHSLDEKGYNPINQIVGYVLSGDPAYVPRYNDARNQIRKYERDEIVEELVRYYLQGNGIDVK</sequence>
<name>Y1798_STRPQ</name>
<accession>P0DH01</accession>
<accession>P60361</accession>
<accession>Q99XP3</accession>
<feature type="chain" id="PRO_0000411640" description="UPF0297 protein SPs1796">
    <location>
        <begin position="1"/>
        <end position="89"/>
    </location>
</feature>
<dbReference type="EMBL" id="BA000034">
    <property type="protein sequence ID" value="BAC64891.1"/>
    <property type="molecule type" value="Genomic_DNA"/>
</dbReference>
<dbReference type="RefSeq" id="WP_002982194.1">
    <property type="nucleotide sequence ID" value="NC_004606.1"/>
</dbReference>
<dbReference type="SMR" id="P0DH01"/>
<dbReference type="KEGG" id="sps:SPs1796"/>
<dbReference type="HOGENOM" id="CLU_162466_0_0_9"/>
<dbReference type="HAMAP" id="MF_01507">
    <property type="entry name" value="UPF0297"/>
    <property type="match status" value="1"/>
</dbReference>
<dbReference type="InterPro" id="IPR009309">
    <property type="entry name" value="IreB"/>
</dbReference>
<dbReference type="NCBIfam" id="NF003997">
    <property type="entry name" value="PRK05473.1"/>
    <property type="match status" value="1"/>
</dbReference>
<dbReference type="PANTHER" id="PTHR40067">
    <property type="entry name" value="UPF0297 PROTEIN YRZL"/>
    <property type="match status" value="1"/>
</dbReference>
<dbReference type="PANTHER" id="PTHR40067:SF1">
    <property type="entry name" value="UPF0297 PROTEIN YRZL"/>
    <property type="match status" value="1"/>
</dbReference>
<dbReference type="Pfam" id="PF06135">
    <property type="entry name" value="IreB"/>
    <property type="match status" value="1"/>
</dbReference>
<dbReference type="PIRSF" id="PIRSF037258">
    <property type="entry name" value="DUF965_bac"/>
    <property type="match status" value="1"/>
</dbReference>
<organism>
    <name type="scientific">Streptococcus pyogenes serotype M3 (strain SSI-1)</name>
    <dbReference type="NCBI Taxonomy" id="193567"/>
    <lineage>
        <taxon>Bacteria</taxon>
        <taxon>Bacillati</taxon>
        <taxon>Bacillota</taxon>
        <taxon>Bacilli</taxon>
        <taxon>Lactobacillales</taxon>
        <taxon>Streptococcaceae</taxon>
        <taxon>Streptococcus</taxon>
    </lineage>
</organism>
<comment type="similarity">
    <text evidence="1">Belongs to the UPF0297 family.</text>
</comment>
<reference key="1">
    <citation type="journal article" date="2003" name="Genome Res.">
        <title>Genome sequence of an M3 strain of Streptococcus pyogenes reveals a large-scale genomic rearrangement in invasive strains and new insights into phage evolution.</title>
        <authorList>
            <person name="Nakagawa I."/>
            <person name="Kurokawa K."/>
            <person name="Yamashita A."/>
            <person name="Nakata M."/>
            <person name="Tomiyasu Y."/>
            <person name="Okahashi N."/>
            <person name="Kawabata S."/>
            <person name="Yamazaki K."/>
            <person name="Shiba T."/>
            <person name="Yasunaga T."/>
            <person name="Hayashi H."/>
            <person name="Hattori M."/>
            <person name="Hamada S."/>
        </authorList>
    </citation>
    <scope>NUCLEOTIDE SEQUENCE [LARGE SCALE GENOMIC DNA]</scope>
    <source>
        <strain>SSI-1</strain>
    </source>
</reference>
<protein>
    <recommendedName>
        <fullName>UPF0297 protein SPs1796</fullName>
    </recommendedName>
</protein>
<proteinExistence type="inferred from homology"/>
<gene>
    <name type="ordered locus">SPs1796</name>
</gene>
<evidence type="ECO:0000305" key="1"/>